<accession>Q6CFG6</accession>
<sequence>MAPPTQRRYTNNRKRRGPREVGGAKTGDGLTRIMKRIRDLERVLKRPVPMDEQKRIELERAVAAYKVQAEDIIGDRKNKKNVEKYRMIRFFERQKASRKVKQARKLVEQADSDAKKKDAEALVVKYMADLAYTIHFPNDIKYISLYPNGAVDETAESSKQREKMRAEFAEQIKNGELDVDLERAEQVATTKKSKKKREAGADEEVKGDDEDDEFLEKAPKKAKVEEEESDDDEEDEEDDDDDDDSDDDDSDDSGEPQMEIKRTADEKQTKEEESDSEEFVDESEAESEGKPESEENSEDQDDESE</sequence>
<name>EFG1P_YARLI</name>
<gene>
    <name type="primary">EFG1</name>
    <name type="ordered locus">YALI0B07161g</name>
</gene>
<protein>
    <recommendedName>
        <fullName>rRNA-processing protein EFG1</fullName>
    </recommendedName>
</protein>
<feature type="chain" id="PRO_0000330284" description="rRNA-processing protein EFG1">
    <location>
        <begin position="1"/>
        <end position="305"/>
    </location>
</feature>
<feature type="region of interest" description="Disordered" evidence="3">
    <location>
        <begin position="1"/>
        <end position="28"/>
    </location>
</feature>
<feature type="region of interest" description="Disordered" evidence="3">
    <location>
        <begin position="185"/>
        <end position="305"/>
    </location>
</feature>
<feature type="coiled-coil region" evidence="2">
    <location>
        <begin position="51"/>
        <end position="121"/>
    </location>
</feature>
<feature type="compositionally biased region" description="Acidic residues" evidence="3">
    <location>
        <begin position="205"/>
        <end position="214"/>
    </location>
</feature>
<feature type="compositionally biased region" description="Basic and acidic residues" evidence="3">
    <location>
        <begin position="215"/>
        <end position="224"/>
    </location>
</feature>
<feature type="compositionally biased region" description="Acidic residues" evidence="3">
    <location>
        <begin position="225"/>
        <end position="254"/>
    </location>
</feature>
<feature type="compositionally biased region" description="Basic and acidic residues" evidence="3">
    <location>
        <begin position="258"/>
        <end position="271"/>
    </location>
</feature>
<feature type="compositionally biased region" description="Acidic residues" evidence="3">
    <location>
        <begin position="272"/>
        <end position="286"/>
    </location>
</feature>
<feature type="compositionally biased region" description="Acidic residues" evidence="3">
    <location>
        <begin position="294"/>
        <end position="305"/>
    </location>
</feature>
<proteinExistence type="inferred from homology"/>
<keyword id="KW-0175">Coiled coil</keyword>
<keyword id="KW-0539">Nucleus</keyword>
<keyword id="KW-1185">Reference proteome</keyword>
<keyword id="KW-0698">rRNA processing</keyword>
<reference key="1">
    <citation type="journal article" date="2004" name="Nature">
        <title>Genome evolution in yeasts.</title>
        <authorList>
            <person name="Dujon B."/>
            <person name="Sherman D."/>
            <person name="Fischer G."/>
            <person name="Durrens P."/>
            <person name="Casaregola S."/>
            <person name="Lafontaine I."/>
            <person name="de Montigny J."/>
            <person name="Marck C."/>
            <person name="Neuveglise C."/>
            <person name="Talla E."/>
            <person name="Goffard N."/>
            <person name="Frangeul L."/>
            <person name="Aigle M."/>
            <person name="Anthouard V."/>
            <person name="Babour A."/>
            <person name="Barbe V."/>
            <person name="Barnay S."/>
            <person name="Blanchin S."/>
            <person name="Beckerich J.-M."/>
            <person name="Beyne E."/>
            <person name="Bleykasten C."/>
            <person name="Boisrame A."/>
            <person name="Boyer J."/>
            <person name="Cattolico L."/>
            <person name="Confanioleri F."/>
            <person name="de Daruvar A."/>
            <person name="Despons L."/>
            <person name="Fabre E."/>
            <person name="Fairhead C."/>
            <person name="Ferry-Dumazet H."/>
            <person name="Groppi A."/>
            <person name="Hantraye F."/>
            <person name="Hennequin C."/>
            <person name="Jauniaux N."/>
            <person name="Joyet P."/>
            <person name="Kachouri R."/>
            <person name="Kerrest A."/>
            <person name="Koszul R."/>
            <person name="Lemaire M."/>
            <person name="Lesur I."/>
            <person name="Ma L."/>
            <person name="Muller H."/>
            <person name="Nicaud J.-M."/>
            <person name="Nikolski M."/>
            <person name="Oztas S."/>
            <person name="Ozier-Kalogeropoulos O."/>
            <person name="Pellenz S."/>
            <person name="Potier S."/>
            <person name="Richard G.-F."/>
            <person name="Straub M.-L."/>
            <person name="Suleau A."/>
            <person name="Swennen D."/>
            <person name="Tekaia F."/>
            <person name="Wesolowski-Louvel M."/>
            <person name="Westhof E."/>
            <person name="Wirth B."/>
            <person name="Zeniou-Meyer M."/>
            <person name="Zivanovic Y."/>
            <person name="Bolotin-Fukuhara M."/>
            <person name="Thierry A."/>
            <person name="Bouchier C."/>
            <person name="Caudron B."/>
            <person name="Scarpelli C."/>
            <person name="Gaillardin C."/>
            <person name="Weissenbach J."/>
            <person name="Wincker P."/>
            <person name="Souciet J.-L."/>
        </authorList>
    </citation>
    <scope>NUCLEOTIDE SEQUENCE [LARGE SCALE GENOMIC DNA]</scope>
    <source>
        <strain>CLIB 122 / E 150</strain>
    </source>
</reference>
<organism>
    <name type="scientific">Yarrowia lipolytica (strain CLIB 122 / E 150)</name>
    <name type="common">Yeast</name>
    <name type="synonym">Candida lipolytica</name>
    <dbReference type="NCBI Taxonomy" id="284591"/>
    <lineage>
        <taxon>Eukaryota</taxon>
        <taxon>Fungi</taxon>
        <taxon>Dikarya</taxon>
        <taxon>Ascomycota</taxon>
        <taxon>Saccharomycotina</taxon>
        <taxon>Dipodascomycetes</taxon>
        <taxon>Dipodascales</taxon>
        <taxon>Dipodascales incertae sedis</taxon>
        <taxon>Yarrowia</taxon>
    </lineage>
</organism>
<evidence type="ECO:0000250" key="1"/>
<evidence type="ECO:0000255" key="2"/>
<evidence type="ECO:0000256" key="3">
    <source>
        <dbReference type="SAM" id="MobiDB-lite"/>
    </source>
</evidence>
<evidence type="ECO:0000305" key="4"/>
<comment type="function">
    <text evidence="1">Involved in rRNA processing.</text>
</comment>
<comment type="subcellular location">
    <subcellularLocation>
        <location evidence="1">Nucleus</location>
        <location evidence="1">Nucleolus</location>
    </subcellularLocation>
</comment>
<comment type="similarity">
    <text evidence="4">Belongs to the EFG1 family.</text>
</comment>
<dbReference type="EMBL" id="CR382128">
    <property type="protein sequence ID" value="CAG82828.1"/>
    <property type="molecule type" value="Genomic_DNA"/>
</dbReference>
<dbReference type="RefSeq" id="XP_500596.1">
    <property type="nucleotide sequence ID" value="XM_500596.1"/>
</dbReference>
<dbReference type="SMR" id="Q6CFG6"/>
<dbReference type="FunCoup" id="Q6CFG6">
    <property type="interactions" value="177"/>
</dbReference>
<dbReference type="STRING" id="284591.Q6CFG6"/>
<dbReference type="EnsemblFungi" id="CAG82828">
    <property type="protein sequence ID" value="CAG82828"/>
    <property type="gene ID" value="YALI0_B07161g"/>
</dbReference>
<dbReference type="KEGG" id="yli:2907405"/>
<dbReference type="VEuPathDB" id="FungiDB:YALI0_B07161g"/>
<dbReference type="HOGENOM" id="CLU_912782_0_0_1"/>
<dbReference type="InParanoid" id="Q6CFG6"/>
<dbReference type="OMA" id="FMGGNDP"/>
<dbReference type="OrthoDB" id="24684at4891"/>
<dbReference type="Proteomes" id="UP000001300">
    <property type="component" value="Chromosome B"/>
</dbReference>
<dbReference type="GO" id="GO:0005730">
    <property type="term" value="C:nucleolus"/>
    <property type="evidence" value="ECO:0007669"/>
    <property type="project" value="UniProtKB-SubCell"/>
</dbReference>
<dbReference type="GO" id="GO:0000462">
    <property type="term" value="P:maturation of SSU-rRNA from tricistronic rRNA transcript (SSU-rRNA, 5.8S rRNA, LSU-rRNA)"/>
    <property type="evidence" value="ECO:0000318"/>
    <property type="project" value="GO_Central"/>
</dbReference>
<dbReference type="InterPro" id="IPR019310">
    <property type="entry name" value="Efg1"/>
</dbReference>
<dbReference type="InterPro" id="IPR050786">
    <property type="entry name" value="EFG1_rRNA-proc"/>
</dbReference>
<dbReference type="PANTHER" id="PTHR33911">
    <property type="entry name" value="RRNA-PROCESSING PROTEIN EFG1"/>
    <property type="match status" value="1"/>
</dbReference>
<dbReference type="PANTHER" id="PTHR33911:SF1">
    <property type="entry name" value="RRNA-PROCESSING PROTEIN EFG1"/>
    <property type="match status" value="1"/>
</dbReference>
<dbReference type="Pfam" id="PF10153">
    <property type="entry name" value="Efg1"/>
    <property type="match status" value="1"/>
</dbReference>